<gene>
    <name evidence="1" type="primary">purL</name>
    <name type="ordered locus">aq_1836</name>
</gene>
<keyword id="KW-0067">ATP-binding</keyword>
<keyword id="KW-0963">Cytoplasm</keyword>
<keyword id="KW-0436">Ligase</keyword>
<keyword id="KW-0460">Magnesium</keyword>
<keyword id="KW-0479">Metal-binding</keyword>
<keyword id="KW-0547">Nucleotide-binding</keyword>
<keyword id="KW-0658">Purine biosynthesis</keyword>
<keyword id="KW-1185">Reference proteome</keyword>
<comment type="function">
    <text evidence="1">Part of the phosphoribosylformylglycinamidine synthase complex involved in the purines biosynthetic pathway. Catalyzes the ATP-dependent conversion of formylglycinamide ribonucleotide (FGAR) and glutamine to yield formylglycinamidine ribonucleotide (FGAM) and glutamate. The FGAM synthase complex is composed of three subunits. PurQ produces an ammonia molecule by converting glutamine to glutamate. PurL transfers the ammonia molecule to FGAR to form FGAM in an ATP-dependent manner. PurS interacts with PurQ and PurL and is thought to assist in the transfer of the ammonia molecule from PurQ to PurL.</text>
</comment>
<comment type="catalytic activity">
    <reaction evidence="1">
        <text>N(2)-formyl-N(1)-(5-phospho-beta-D-ribosyl)glycinamide + L-glutamine + ATP + H2O = 2-formamido-N(1)-(5-O-phospho-beta-D-ribosyl)acetamidine + L-glutamate + ADP + phosphate + H(+)</text>
        <dbReference type="Rhea" id="RHEA:17129"/>
        <dbReference type="ChEBI" id="CHEBI:15377"/>
        <dbReference type="ChEBI" id="CHEBI:15378"/>
        <dbReference type="ChEBI" id="CHEBI:29985"/>
        <dbReference type="ChEBI" id="CHEBI:30616"/>
        <dbReference type="ChEBI" id="CHEBI:43474"/>
        <dbReference type="ChEBI" id="CHEBI:58359"/>
        <dbReference type="ChEBI" id="CHEBI:147286"/>
        <dbReference type="ChEBI" id="CHEBI:147287"/>
        <dbReference type="ChEBI" id="CHEBI:456216"/>
        <dbReference type="EC" id="6.3.5.3"/>
    </reaction>
</comment>
<comment type="pathway">
    <text evidence="1">Purine metabolism; IMP biosynthesis via de novo pathway; 5-amino-1-(5-phospho-D-ribosyl)imidazole from N(2)-formyl-N(1)-(5-phospho-D-ribosyl)glycinamide: step 1/2.</text>
</comment>
<comment type="subunit">
    <text evidence="1">Monomer. Part of the FGAM synthase complex composed of 1 PurL, 1 PurQ and 2 PurS subunits.</text>
</comment>
<comment type="subcellular location">
    <subcellularLocation>
        <location evidence="1">Cytoplasm</location>
    </subcellularLocation>
</comment>
<comment type="similarity">
    <text evidence="1">Belongs to the FGAMS family.</text>
</comment>
<protein>
    <recommendedName>
        <fullName evidence="1">Phosphoribosylformylglycinamidine synthase subunit PurL</fullName>
        <shortName evidence="1">FGAM synthase</shortName>
        <ecNumber evidence="1">6.3.5.3</ecNumber>
    </recommendedName>
    <alternativeName>
        <fullName evidence="1">Formylglycinamide ribonucleotide amidotransferase subunit II</fullName>
        <shortName evidence="1">FGAR amidotransferase II</shortName>
        <shortName evidence="1">FGAR-AT II</shortName>
    </alternativeName>
    <alternativeName>
        <fullName evidence="1">Glutamine amidotransferase PurL</fullName>
    </alternativeName>
    <alternativeName>
        <fullName evidence="1">Phosphoribosylformylglycinamidine synthase subunit II</fullName>
    </alternativeName>
</protein>
<evidence type="ECO:0000255" key="1">
    <source>
        <dbReference type="HAMAP-Rule" id="MF_00420"/>
    </source>
</evidence>
<reference key="1">
    <citation type="journal article" date="1998" name="Nature">
        <title>The complete genome of the hyperthermophilic bacterium Aquifex aeolicus.</title>
        <authorList>
            <person name="Deckert G."/>
            <person name="Warren P.V."/>
            <person name="Gaasterland T."/>
            <person name="Young W.G."/>
            <person name="Lenox A.L."/>
            <person name="Graham D.E."/>
            <person name="Overbeek R."/>
            <person name="Snead M.A."/>
            <person name="Keller M."/>
            <person name="Aujay M."/>
            <person name="Huber R."/>
            <person name="Feldman R.A."/>
            <person name="Short J.M."/>
            <person name="Olsen G.J."/>
            <person name="Swanson R.V."/>
        </authorList>
    </citation>
    <scope>NUCLEOTIDE SEQUENCE [LARGE SCALE GENOMIC DNA]</scope>
    <source>
        <strain>VF5</strain>
    </source>
</reference>
<accession>O67691</accession>
<sequence length="745" mass="83213">MERVWEAYGLTEEEYRKILKTLKREPNHVELGVLGALWSEHCSYKSSKKHLKKFPTKAEWVVQGPGENAGVVKIDEKVWVAFKVESHNHPSYIEPFHGAATGVGGIIRDVLSMGARPIALADSLRFGEFNYHETKRLVKGVVSGISFYGNCIGVPTVAGETVFEPSYKTNPLVNAFCLGVIPAGRMYRARATREGQLLFLIGSSTGRDGIFGAVMASGEFSEDVEEKRPNVQIGDPYFGKKLVEAIMEIVEKDLIVGMQDLGAAGLAGSASEIAAKSEKGVELYLENVPLREKDMNPYEILLSESQERMLLVVEEENVEKVKEIANKWHLEGAVVGKITDDDTFRAYYKGELVAELPVSLIVDEAPVYDRPYKEPEYMKEVRNFNQEELPQTDVKEALKKLLSSPNISCKEWVYTQYDYQVGTNTLLIPGHDAAVLRLKWVLRPELTTEKGIAISSEGNGRMVYLNPYEGGKFVVAEVCRNLACVGAKPLAITDCLNFGNPERPEIMWQFVKAVEGMAEACEELGIPVVSGNVSLYNETVEKNEIRNVFPTPIVVGVGVLEKAEKYTPSKVEKESELYLVGNLEENLRLDGSEYLKVIHGLIKGDVPPVDLEKEKILINLLISFNNKELITCAHDVSVGGLLIALLEMVFRTPYGLEVEVYTDERPDVFFFSENPTRVIIGVESDKAEEVKNAVEKAGLEWMYIGKTTEEKKIKVTFNGDTLLEDELEEYEKLWRTSLEKLLGST</sequence>
<feature type="chain" id="PRO_0000100431" description="Phosphoribosylformylglycinamidine synthase subunit PurL">
    <location>
        <begin position="1"/>
        <end position="745"/>
    </location>
</feature>
<feature type="active site" evidence="1">
    <location>
        <position position="41"/>
    </location>
</feature>
<feature type="active site" description="Proton acceptor" evidence="1">
    <location>
        <position position="87"/>
    </location>
</feature>
<feature type="binding site" evidence="1">
    <location>
        <position position="44"/>
    </location>
    <ligand>
        <name>ATP</name>
        <dbReference type="ChEBI" id="CHEBI:30616"/>
    </ligand>
</feature>
<feature type="binding site" evidence="1">
    <location>
        <position position="83"/>
    </location>
    <ligand>
        <name>ATP</name>
        <dbReference type="ChEBI" id="CHEBI:30616"/>
    </ligand>
</feature>
<feature type="binding site" evidence="1">
    <location>
        <position position="85"/>
    </location>
    <ligand>
        <name>Mg(2+)</name>
        <dbReference type="ChEBI" id="CHEBI:18420"/>
        <label>1</label>
    </ligand>
</feature>
<feature type="binding site" evidence="1">
    <location>
        <begin position="86"/>
        <end position="89"/>
    </location>
    <ligand>
        <name>substrate</name>
    </ligand>
</feature>
<feature type="binding site" evidence="1">
    <location>
        <position position="108"/>
    </location>
    <ligand>
        <name>substrate</name>
    </ligand>
</feature>
<feature type="binding site" evidence="1">
    <location>
        <position position="109"/>
    </location>
    <ligand>
        <name>Mg(2+)</name>
        <dbReference type="ChEBI" id="CHEBI:18420"/>
        <label>2</label>
    </ligand>
</feature>
<feature type="binding site" evidence="1">
    <location>
        <position position="232"/>
    </location>
    <ligand>
        <name>substrate</name>
    </ligand>
</feature>
<feature type="binding site" evidence="1">
    <location>
        <position position="260"/>
    </location>
    <ligand>
        <name>Mg(2+)</name>
        <dbReference type="ChEBI" id="CHEBI:18420"/>
        <label>2</label>
    </ligand>
</feature>
<feature type="binding site" evidence="1">
    <location>
        <begin position="304"/>
        <end position="306"/>
    </location>
    <ligand>
        <name>substrate</name>
    </ligand>
</feature>
<feature type="binding site" evidence="1">
    <location>
        <position position="494"/>
    </location>
    <ligand>
        <name>ATP</name>
        <dbReference type="ChEBI" id="CHEBI:30616"/>
    </ligand>
</feature>
<feature type="binding site" evidence="1">
    <location>
        <position position="531"/>
    </location>
    <ligand>
        <name>ATP</name>
        <dbReference type="ChEBI" id="CHEBI:30616"/>
    </ligand>
</feature>
<feature type="binding site" evidence="1">
    <location>
        <position position="532"/>
    </location>
    <ligand>
        <name>Mg(2+)</name>
        <dbReference type="ChEBI" id="CHEBI:18420"/>
        <label>1</label>
    </ligand>
</feature>
<feature type="binding site" evidence="1">
    <location>
        <position position="534"/>
    </location>
    <ligand>
        <name>substrate</name>
    </ligand>
</feature>
<organism>
    <name type="scientific">Aquifex aeolicus (strain VF5)</name>
    <dbReference type="NCBI Taxonomy" id="224324"/>
    <lineage>
        <taxon>Bacteria</taxon>
        <taxon>Pseudomonadati</taxon>
        <taxon>Aquificota</taxon>
        <taxon>Aquificia</taxon>
        <taxon>Aquificales</taxon>
        <taxon>Aquificaceae</taxon>
        <taxon>Aquifex</taxon>
    </lineage>
</organism>
<proteinExistence type="inferred from homology"/>
<name>PURL_AQUAE</name>
<dbReference type="EC" id="6.3.5.3" evidence="1"/>
<dbReference type="EMBL" id="AE000657">
    <property type="protein sequence ID" value="AAC07653.1"/>
    <property type="molecule type" value="Genomic_DNA"/>
</dbReference>
<dbReference type="PIR" id="A70458">
    <property type="entry name" value="A70458"/>
</dbReference>
<dbReference type="RefSeq" id="NP_214258.1">
    <property type="nucleotide sequence ID" value="NC_000918.1"/>
</dbReference>
<dbReference type="RefSeq" id="WP_010881194.1">
    <property type="nucleotide sequence ID" value="NC_000918.1"/>
</dbReference>
<dbReference type="SMR" id="O67691"/>
<dbReference type="FunCoup" id="O67691">
    <property type="interactions" value="417"/>
</dbReference>
<dbReference type="STRING" id="224324.aq_1836"/>
<dbReference type="EnsemblBacteria" id="AAC07653">
    <property type="protein sequence ID" value="AAC07653"/>
    <property type="gene ID" value="aq_1836"/>
</dbReference>
<dbReference type="KEGG" id="aae:aq_1836"/>
<dbReference type="PATRIC" id="fig|224324.8.peg.1416"/>
<dbReference type="eggNOG" id="COG0046">
    <property type="taxonomic scope" value="Bacteria"/>
</dbReference>
<dbReference type="HOGENOM" id="CLU_003100_0_1_0"/>
<dbReference type="InParanoid" id="O67691"/>
<dbReference type="OrthoDB" id="9804441at2"/>
<dbReference type="UniPathway" id="UPA00074">
    <property type="reaction ID" value="UER00128"/>
</dbReference>
<dbReference type="Proteomes" id="UP000000798">
    <property type="component" value="Chromosome"/>
</dbReference>
<dbReference type="GO" id="GO:0005737">
    <property type="term" value="C:cytoplasm"/>
    <property type="evidence" value="ECO:0007669"/>
    <property type="project" value="UniProtKB-SubCell"/>
</dbReference>
<dbReference type="GO" id="GO:0005524">
    <property type="term" value="F:ATP binding"/>
    <property type="evidence" value="ECO:0007669"/>
    <property type="project" value="UniProtKB-UniRule"/>
</dbReference>
<dbReference type="GO" id="GO:0000287">
    <property type="term" value="F:magnesium ion binding"/>
    <property type="evidence" value="ECO:0007669"/>
    <property type="project" value="UniProtKB-UniRule"/>
</dbReference>
<dbReference type="GO" id="GO:0004642">
    <property type="term" value="F:phosphoribosylformylglycinamidine synthase activity"/>
    <property type="evidence" value="ECO:0000318"/>
    <property type="project" value="GO_Central"/>
</dbReference>
<dbReference type="GO" id="GO:0006189">
    <property type="term" value="P:'de novo' IMP biosynthetic process"/>
    <property type="evidence" value="ECO:0007669"/>
    <property type="project" value="UniProtKB-UniRule"/>
</dbReference>
<dbReference type="GO" id="GO:0006164">
    <property type="term" value="P:purine nucleotide biosynthetic process"/>
    <property type="evidence" value="ECO:0000318"/>
    <property type="project" value="GO_Central"/>
</dbReference>
<dbReference type="CDD" id="cd02203">
    <property type="entry name" value="PurL_repeat1"/>
    <property type="match status" value="1"/>
</dbReference>
<dbReference type="CDD" id="cd02204">
    <property type="entry name" value="PurL_repeat2"/>
    <property type="match status" value="1"/>
</dbReference>
<dbReference type="FunFam" id="3.30.1330.10:FF:000004">
    <property type="entry name" value="Phosphoribosylformylglycinamidine synthase subunit PurL"/>
    <property type="match status" value="1"/>
</dbReference>
<dbReference type="Gene3D" id="3.90.650.10">
    <property type="entry name" value="PurM-like C-terminal domain"/>
    <property type="match status" value="2"/>
</dbReference>
<dbReference type="Gene3D" id="3.30.1330.10">
    <property type="entry name" value="PurM-like, N-terminal domain"/>
    <property type="match status" value="2"/>
</dbReference>
<dbReference type="HAMAP" id="MF_00420">
    <property type="entry name" value="PurL_2"/>
    <property type="match status" value="1"/>
</dbReference>
<dbReference type="InterPro" id="IPR010074">
    <property type="entry name" value="PRibForGlyAmidine_synth_PurL"/>
</dbReference>
<dbReference type="InterPro" id="IPR041609">
    <property type="entry name" value="PurL_linker"/>
</dbReference>
<dbReference type="InterPro" id="IPR010918">
    <property type="entry name" value="PurM-like_C_dom"/>
</dbReference>
<dbReference type="InterPro" id="IPR036676">
    <property type="entry name" value="PurM-like_C_sf"/>
</dbReference>
<dbReference type="InterPro" id="IPR016188">
    <property type="entry name" value="PurM-like_N"/>
</dbReference>
<dbReference type="InterPro" id="IPR036921">
    <property type="entry name" value="PurM-like_N_sf"/>
</dbReference>
<dbReference type="NCBIfam" id="TIGR01736">
    <property type="entry name" value="FGAM_synth_II"/>
    <property type="match status" value="1"/>
</dbReference>
<dbReference type="NCBIfam" id="NF002290">
    <property type="entry name" value="PRK01213.1"/>
    <property type="match status" value="1"/>
</dbReference>
<dbReference type="PANTHER" id="PTHR43555">
    <property type="entry name" value="PHOSPHORIBOSYLFORMYLGLYCINAMIDINE SYNTHASE SUBUNIT PURL"/>
    <property type="match status" value="1"/>
</dbReference>
<dbReference type="PANTHER" id="PTHR43555:SF1">
    <property type="entry name" value="PHOSPHORIBOSYLFORMYLGLYCINAMIDINE SYNTHASE SUBUNIT PURL"/>
    <property type="match status" value="1"/>
</dbReference>
<dbReference type="Pfam" id="PF00586">
    <property type="entry name" value="AIRS"/>
    <property type="match status" value="2"/>
</dbReference>
<dbReference type="Pfam" id="PF02769">
    <property type="entry name" value="AIRS_C"/>
    <property type="match status" value="2"/>
</dbReference>
<dbReference type="Pfam" id="PF18072">
    <property type="entry name" value="FGAR-AT_linker"/>
    <property type="match status" value="1"/>
</dbReference>
<dbReference type="PIRSF" id="PIRSF001587">
    <property type="entry name" value="FGAM_synthase_II"/>
    <property type="match status" value="1"/>
</dbReference>
<dbReference type="SUPFAM" id="SSF56042">
    <property type="entry name" value="PurM C-terminal domain-like"/>
    <property type="match status" value="2"/>
</dbReference>
<dbReference type="SUPFAM" id="SSF55326">
    <property type="entry name" value="PurM N-terminal domain-like"/>
    <property type="match status" value="2"/>
</dbReference>